<accession>B7JUX4</accession>
<dbReference type="EC" id="2.3.1.275" evidence="1"/>
<dbReference type="EMBL" id="CP001287">
    <property type="protein sequence ID" value="ACK66826.1"/>
    <property type="molecule type" value="Genomic_DNA"/>
</dbReference>
<dbReference type="RefSeq" id="WP_012596092.1">
    <property type="nucleotide sequence ID" value="NC_011726.1"/>
</dbReference>
<dbReference type="SMR" id="B7JUX4"/>
<dbReference type="STRING" id="41431.PCC8801_2827"/>
<dbReference type="KEGG" id="cyp:PCC8801_2827"/>
<dbReference type="eggNOG" id="COG0344">
    <property type="taxonomic scope" value="Bacteria"/>
</dbReference>
<dbReference type="HOGENOM" id="CLU_081254_7_1_3"/>
<dbReference type="OrthoDB" id="9777124at2"/>
<dbReference type="UniPathway" id="UPA00085"/>
<dbReference type="Proteomes" id="UP000008204">
    <property type="component" value="Chromosome"/>
</dbReference>
<dbReference type="GO" id="GO:0005886">
    <property type="term" value="C:plasma membrane"/>
    <property type="evidence" value="ECO:0007669"/>
    <property type="project" value="UniProtKB-SubCell"/>
</dbReference>
<dbReference type="GO" id="GO:0043772">
    <property type="term" value="F:acyl-phosphate glycerol-3-phosphate acyltransferase activity"/>
    <property type="evidence" value="ECO:0007669"/>
    <property type="project" value="UniProtKB-UniRule"/>
</dbReference>
<dbReference type="GO" id="GO:0008654">
    <property type="term" value="P:phospholipid biosynthetic process"/>
    <property type="evidence" value="ECO:0007669"/>
    <property type="project" value="UniProtKB-UniRule"/>
</dbReference>
<dbReference type="HAMAP" id="MF_01043">
    <property type="entry name" value="PlsY"/>
    <property type="match status" value="1"/>
</dbReference>
<dbReference type="InterPro" id="IPR003811">
    <property type="entry name" value="G3P_acylTferase_PlsY"/>
</dbReference>
<dbReference type="NCBIfam" id="TIGR00023">
    <property type="entry name" value="glycerol-3-phosphate 1-O-acyltransferase PlsY"/>
    <property type="match status" value="1"/>
</dbReference>
<dbReference type="PANTHER" id="PTHR30309:SF0">
    <property type="entry name" value="GLYCEROL-3-PHOSPHATE ACYLTRANSFERASE-RELATED"/>
    <property type="match status" value="1"/>
</dbReference>
<dbReference type="PANTHER" id="PTHR30309">
    <property type="entry name" value="INNER MEMBRANE PROTEIN YGIH"/>
    <property type="match status" value="1"/>
</dbReference>
<dbReference type="Pfam" id="PF02660">
    <property type="entry name" value="G3P_acyltransf"/>
    <property type="match status" value="1"/>
</dbReference>
<dbReference type="SMART" id="SM01207">
    <property type="entry name" value="G3P_acyltransf"/>
    <property type="match status" value="1"/>
</dbReference>
<gene>
    <name evidence="1" type="primary">plsY</name>
    <name type="ordered locus">PCC8801_2827</name>
</gene>
<evidence type="ECO:0000255" key="1">
    <source>
        <dbReference type="HAMAP-Rule" id="MF_01043"/>
    </source>
</evidence>
<name>PLSY_RIPO1</name>
<feature type="chain" id="PRO_1000149567" description="Glycerol-3-phosphate acyltransferase">
    <location>
        <begin position="1"/>
        <end position="217"/>
    </location>
</feature>
<feature type="transmembrane region" description="Helical" evidence="1">
    <location>
        <begin position="1"/>
        <end position="21"/>
    </location>
</feature>
<feature type="transmembrane region" description="Helical" evidence="1">
    <location>
        <begin position="54"/>
        <end position="74"/>
    </location>
</feature>
<feature type="transmembrane region" description="Helical" evidence="1">
    <location>
        <begin position="84"/>
        <end position="104"/>
    </location>
</feature>
<feature type="transmembrane region" description="Helical" evidence="1">
    <location>
        <begin position="126"/>
        <end position="146"/>
    </location>
</feature>
<feature type="transmembrane region" description="Helical" evidence="1">
    <location>
        <begin position="165"/>
        <end position="185"/>
    </location>
</feature>
<keyword id="KW-0997">Cell inner membrane</keyword>
<keyword id="KW-1003">Cell membrane</keyword>
<keyword id="KW-0444">Lipid biosynthesis</keyword>
<keyword id="KW-0443">Lipid metabolism</keyword>
<keyword id="KW-0472">Membrane</keyword>
<keyword id="KW-0594">Phospholipid biosynthesis</keyword>
<keyword id="KW-1208">Phospholipid metabolism</keyword>
<keyword id="KW-1185">Reference proteome</keyword>
<keyword id="KW-0808">Transferase</keyword>
<keyword id="KW-0812">Transmembrane</keyword>
<keyword id="KW-1133">Transmembrane helix</keyword>
<organism>
    <name type="scientific">Rippkaea orientalis (strain PCC 8801 / RF-1)</name>
    <name type="common">Cyanothece sp. (strain PCC 8801)</name>
    <dbReference type="NCBI Taxonomy" id="41431"/>
    <lineage>
        <taxon>Bacteria</taxon>
        <taxon>Bacillati</taxon>
        <taxon>Cyanobacteriota</taxon>
        <taxon>Cyanophyceae</taxon>
        <taxon>Oscillatoriophycideae</taxon>
        <taxon>Chroococcales</taxon>
        <taxon>Aphanothecaceae</taxon>
        <taxon>Rippkaea</taxon>
        <taxon>Rippkaea orientalis</taxon>
    </lineage>
</organism>
<reference key="1">
    <citation type="journal article" date="2011" name="MBio">
        <title>Novel metabolic attributes of the genus Cyanothece, comprising a group of unicellular nitrogen-fixing Cyanobacteria.</title>
        <authorList>
            <person name="Bandyopadhyay A."/>
            <person name="Elvitigala T."/>
            <person name="Welsh E."/>
            <person name="Stockel J."/>
            <person name="Liberton M."/>
            <person name="Min H."/>
            <person name="Sherman L.A."/>
            <person name="Pakrasi H.B."/>
        </authorList>
    </citation>
    <scope>NUCLEOTIDE SEQUENCE [LARGE SCALE GENOMIC DNA]</scope>
    <source>
        <strain>PCC 8801 / RF-1</strain>
    </source>
</reference>
<protein>
    <recommendedName>
        <fullName evidence="1">Glycerol-3-phosphate acyltransferase</fullName>
    </recommendedName>
    <alternativeName>
        <fullName evidence="1">Acyl-PO4 G3P acyltransferase</fullName>
    </alternativeName>
    <alternativeName>
        <fullName evidence="1">Acyl-phosphate--glycerol-3-phosphate acyltransferase</fullName>
    </alternativeName>
    <alternativeName>
        <fullName evidence="1">G3P acyltransferase</fullName>
        <shortName evidence="1">GPAT</shortName>
        <ecNumber evidence="1">2.3.1.275</ecNumber>
    </alternativeName>
    <alternativeName>
        <fullName evidence="1">Lysophosphatidic acid synthase</fullName>
        <shortName evidence="1">LPA synthase</shortName>
    </alternativeName>
</protein>
<comment type="function">
    <text evidence="1">Catalyzes the transfer of an acyl group from acyl-phosphate (acyl-PO(4)) to glycerol-3-phosphate (G3P) to form lysophosphatidic acid (LPA). This enzyme utilizes acyl-phosphate as fatty acyl donor, but not acyl-CoA or acyl-ACP.</text>
</comment>
<comment type="catalytic activity">
    <reaction evidence="1">
        <text>an acyl phosphate + sn-glycerol 3-phosphate = a 1-acyl-sn-glycero-3-phosphate + phosphate</text>
        <dbReference type="Rhea" id="RHEA:34075"/>
        <dbReference type="ChEBI" id="CHEBI:43474"/>
        <dbReference type="ChEBI" id="CHEBI:57597"/>
        <dbReference type="ChEBI" id="CHEBI:57970"/>
        <dbReference type="ChEBI" id="CHEBI:59918"/>
        <dbReference type="EC" id="2.3.1.275"/>
    </reaction>
</comment>
<comment type="pathway">
    <text evidence="1">Lipid metabolism; phospholipid metabolism.</text>
</comment>
<comment type="subunit">
    <text evidence="1">Probably interacts with PlsX.</text>
</comment>
<comment type="subcellular location">
    <subcellularLocation>
        <location evidence="1">Cell inner membrane</location>
        <topology evidence="1">Multi-pass membrane protein</topology>
    </subcellularLocation>
</comment>
<comment type="similarity">
    <text evidence="1">Belongs to the PlsY family.</text>
</comment>
<sequence length="217" mass="22788">MAWAISGLLVILGYLLGSIPTGYLMVRALKGIDIREQGSGSTGATNVLRTVGKTAAIAVLIIDMLKAMVAVGGVKLLYFGVPSAIVPLDWKPWLIVTVASAAILGHSKSIFLNFTGGKSVASSLGVLLVLNPLVALGALASFLFMLGITRIVSLSSITGAIAVNLLMLVLHQPLAYILFAILAGIYVIVRHKTNISRILQGTEPKIGQKLTEEAETV</sequence>
<proteinExistence type="inferred from homology"/>